<comment type="function">
    <text evidence="1">Catalyzes the phosphorolysis of diverse nucleosides, yielding D-ribose 1-phosphate and the respective free bases. Can use uridine, adenosine, guanosine, cytidine, thymidine, inosine and xanthosine as substrates. Also catalyzes the reverse reactions.</text>
</comment>
<comment type="catalytic activity">
    <reaction evidence="1">
        <text>a purine D-ribonucleoside + phosphate = a purine nucleobase + alpha-D-ribose 1-phosphate</text>
        <dbReference type="Rhea" id="RHEA:19805"/>
        <dbReference type="ChEBI" id="CHEBI:26386"/>
        <dbReference type="ChEBI" id="CHEBI:43474"/>
        <dbReference type="ChEBI" id="CHEBI:57720"/>
        <dbReference type="ChEBI" id="CHEBI:142355"/>
        <dbReference type="EC" id="2.4.2.1"/>
    </reaction>
</comment>
<comment type="catalytic activity">
    <reaction evidence="1">
        <text>adenosine + phosphate = alpha-D-ribose 1-phosphate + adenine</text>
        <dbReference type="Rhea" id="RHEA:27642"/>
        <dbReference type="ChEBI" id="CHEBI:16335"/>
        <dbReference type="ChEBI" id="CHEBI:16708"/>
        <dbReference type="ChEBI" id="CHEBI:43474"/>
        <dbReference type="ChEBI" id="CHEBI:57720"/>
        <dbReference type="EC" id="2.4.2.1"/>
    </reaction>
</comment>
<comment type="catalytic activity">
    <reaction evidence="1">
        <text>cytidine + phosphate = cytosine + alpha-D-ribose 1-phosphate</text>
        <dbReference type="Rhea" id="RHEA:52540"/>
        <dbReference type="ChEBI" id="CHEBI:16040"/>
        <dbReference type="ChEBI" id="CHEBI:17562"/>
        <dbReference type="ChEBI" id="CHEBI:43474"/>
        <dbReference type="ChEBI" id="CHEBI:57720"/>
        <dbReference type="EC" id="2.4.2.2"/>
    </reaction>
</comment>
<comment type="catalytic activity">
    <reaction evidence="1">
        <text>guanosine + phosphate = alpha-D-ribose 1-phosphate + guanine</text>
        <dbReference type="Rhea" id="RHEA:13233"/>
        <dbReference type="ChEBI" id="CHEBI:16235"/>
        <dbReference type="ChEBI" id="CHEBI:16750"/>
        <dbReference type="ChEBI" id="CHEBI:43474"/>
        <dbReference type="ChEBI" id="CHEBI:57720"/>
        <dbReference type="EC" id="2.4.2.1"/>
    </reaction>
</comment>
<comment type="catalytic activity">
    <reaction evidence="1">
        <text>inosine + phosphate = alpha-D-ribose 1-phosphate + hypoxanthine</text>
        <dbReference type="Rhea" id="RHEA:27646"/>
        <dbReference type="ChEBI" id="CHEBI:17368"/>
        <dbReference type="ChEBI" id="CHEBI:17596"/>
        <dbReference type="ChEBI" id="CHEBI:43474"/>
        <dbReference type="ChEBI" id="CHEBI:57720"/>
        <dbReference type="EC" id="2.4.2.1"/>
    </reaction>
</comment>
<comment type="catalytic activity">
    <reaction evidence="1">
        <text>thymidine + phosphate = 2-deoxy-alpha-D-ribose 1-phosphate + thymine</text>
        <dbReference type="Rhea" id="RHEA:16037"/>
        <dbReference type="ChEBI" id="CHEBI:17748"/>
        <dbReference type="ChEBI" id="CHEBI:17821"/>
        <dbReference type="ChEBI" id="CHEBI:43474"/>
        <dbReference type="ChEBI" id="CHEBI:57259"/>
        <dbReference type="EC" id="2.4.2.2"/>
    </reaction>
</comment>
<comment type="catalytic activity">
    <reaction evidence="1">
        <text>uridine + phosphate = alpha-D-ribose 1-phosphate + uracil</text>
        <dbReference type="Rhea" id="RHEA:24388"/>
        <dbReference type="ChEBI" id="CHEBI:16704"/>
        <dbReference type="ChEBI" id="CHEBI:17568"/>
        <dbReference type="ChEBI" id="CHEBI:43474"/>
        <dbReference type="ChEBI" id="CHEBI:57720"/>
        <dbReference type="EC" id="2.4.2.2"/>
    </reaction>
</comment>
<comment type="catalytic activity">
    <reaction evidence="1">
        <text>xanthosine + phosphate = alpha-D-ribose 1-phosphate + xanthine</text>
        <dbReference type="Rhea" id="RHEA:27638"/>
        <dbReference type="ChEBI" id="CHEBI:17712"/>
        <dbReference type="ChEBI" id="CHEBI:18107"/>
        <dbReference type="ChEBI" id="CHEBI:43474"/>
        <dbReference type="ChEBI" id="CHEBI:57720"/>
        <dbReference type="EC" id="2.4.2.1"/>
    </reaction>
</comment>
<comment type="similarity">
    <text evidence="1">Belongs to the nucleoside phosphorylase PpnP family.</text>
</comment>
<protein>
    <recommendedName>
        <fullName evidence="1">Pyrimidine/purine nucleoside phosphorylase</fullName>
        <ecNumber evidence="1">2.4.2.1</ecNumber>
        <ecNumber evidence="1">2.4.2.2</ecNumber>
    </recommendedName>
    <alternativeName>
        <fullName evidence="1">Adenosine phosphorylase</fullName>
    </alternativeName>
    <alternativeName>
        <fullName evidence="1">Cytidine phosphorylase</fullName>
    </alternativeName>
    <alternativeName>
        <fullName evidence="1">Guanosine phosphorylase</fullName>
    </alternativeName>
    <alternativeName>
        <fullName evidence="1">Inosine phosphorylase</fullName>
    </alternativeName>
    <alternativeName>
        <fullName evidence="1">Thymidine phosphorylase</fullName>
    </alternativeName>
    <alternativeName>
        <fullName evidence="1">Uridine phosphorylase</fullName>
    </alternativeName>
    <alternativeName>
        <fullName evidence="1">Xanthosine phosphorylase</fullName>
    </alternativeName>
</protein>
<dbReference type="EC" id="2.4.2.1" evidence="1"/>
<dbReference type="EC" id="2.4.2.2" evidence="1"/>
<dbReference type="EMBL" id="CP000863">
    <property type="protein sequence ID" value="ACC55651.1"/>
    <property type="molecule type" value="Genomic_DNA"/>
</dbReference>
<dbReference type="RefSeq" id="WP_000099685.1">
    <property type="nucleotide sequence ID" value="NZ_CP031380.1"/>
</dbReference>
<dbReference type="SMR" id="B2I2L6"/>
<dbReference type="KEGG" id="abc:ACICU_00339"/>
<dbReference type="HOGENOM" id="CLU_157874_1_0_6"/>
<dbReference type="Proteomes" id="UP000008839">
    <property type="component" value="Chromosome"/>
</dbReference>
<dbReference type="GO" id="GO:0005829">
    <property type="term" value="C:cytosol"/>
    <property type="evidence" value="ECO:0007669"/>
    <property type="project" value="TreeGrafter"/>
</dbReference>
<dbReference type="GO" id="GO:0047975">
    <property type="term" value="F:guanosine phosphorylase activity"/>
    <property type="evidence" value="ECO:0007669"/>
    <property type="project" value="UniProtKB-EC"/>
</dbReference>
<dbReference type="GO" id="GO:0004731">
    <property type="term" value="F:purine-nucleoside phosphorylase activity"/>
    <property type="evidence" value="ECO:0007669"/>
    <property type="project" value="UniProtKB-UniRule"/>
</dbReference>
<dbReference type="GO" id="GO:0009032">
    <property type="term" value="F:thymidine phosphorylase activity"/>
    <property type="evidence" value="ECO:0007669"/>
    <property type="project" value="UniProtKB-EC"/>
</dbReference>
<dbReference type="GO" id="GO:0004850">
    <property type="term" value="F:uridine phosphorylase activity"/>
    <property type="evidence" value="ECO:0007669"/>
    <property type="project" value="UniProtKB-EC"/>
</dbReference>
<dbReference type="CDD" id="cd20296">
    <property type="entry name" value="cupin_PpnP-like"/>
    <property type="match status" value="1"/>
</dbReference>
<dbReference type="Gene3D" id="2.60.120.10">
    <property type="entry name" value="Jelly Rolls"/>
    <property type="match status" value="1"/>
</dbReference>
<dbReference type="HAMAP" id="MF_01537">
    <property type="entry name" value="Nucleos_phosphorylase_PpnP"/>
    <property type="match status" value="1"/>
</dbReference>
<dbReference type="InterPro" id="IPR009664">
    <property type="entry name" value="Ppnp"/>
</dbReference>
<dbReference type="InterPro" id="IPR014710">
    <property type="entry name" value="RmlC-like_jellyroll"/>
</dbReference>
<dbReference type="InterPro" id="IPR011051">
    <property type="entry name" value="RmlC_Cupin_sf"/>
</dbReference>
<dbReference type="PANTHER" id="PTHR36540">
    <property type="entry name" value="PYRIMIDINE/PURINE NUCLEOSIDE PHOSPHORYLASE"/>
    <property type="match status" value="1"/>
</dbReference>
<dbReference type="PANTHER" id="PTHR36540:SF1">
    <property type="entry name" value="PYRIMIDINE_PURINE NUCLEOSIDE PHOSPHORYLASE"/>
    <property type="match status" value="1"/>
</dbReference>
<dbReference type="Pfam" id="PF06865">
    <property type="entry name" value="Ppnp"/>
    <property type="match status" value="1"/>
</dbReference>
<dbReference type="SUPFAM" id="SSF51182">
    <property type="entry name" value="RmlC-like cupins"/>
    <property type="match status" value="1"/>
</dbReference>
<accession>B2I2L6</accession>
<sequence length="108" mass="12060">MSSTQFDHVTVIKKSNVYFGGACISHTVQFEDGTKKTLGVILPTEQPLTFETHVPERMEIISGECRVKIADSNESELFRAGQSFYVPGNSVFKIETDEVLDYVCHLEG</sequence>
<reference key="1">
    <citation type="journal article" date="2008" name="Antimicrob. Agents Chemother.">
        <title>Whole-genome pyrosequencing of an epidemic multidrug-resistant Acinetobacter baumannii strain belonging to the European clone II group.</title>
        <authorList>
            <person name="Iacono M."/>
            <person name="Villa L."/>
            <person name="Fortini D."/>
            <person name="Bordoni R."/>
            <person name="Imperi F."/>
            <person name="Bonnal R.J."/>
            <person name="Sicheritz-Ponten T."/>
            <person name="De Bellis G."/>
            <person name="Visca P."/>
            <person name="Cassone A."/>
            <person name="Carattoli A."/>
        </authorList>
    </citation>
    <scope>NUCLEOTIDE SEQUENCE [LARGE SCALE GENOMIC DNA]</scope>
    <source>
        <strain>ACICU</strain>
    </source>
</reference>
<evidence type="ECO:0000255" key="1">
    <source>
        <dbReference type="HAMAP-Rule" id="MF_01537"/>
    </source>
</evidence>
<proteinExistence type="inferred from homology"/>
<keyword id="KW-0328">Glycosyltransferase</keyword>
<keyword id="KW-0808">Transferase</keyword>
<feature type="chain" id="PRO_1000198644" description="Pyrimidine/purine nucleoside phosphorylase">
    <location>
        <begin position="1"/>
        <end position="108"/>
    </location>
</feature>
<name>PPNP_ACIBC</name>
<gene>
    <name evidence="1" type="primary">ppnP</name>
    <name type="ordered locus">ACICU_00339</name>
</gene>
<organism>
    <name type="scientific">Acinetobacter baumannii (strain ACICU)</name>
    <dbReference type="NCBI Taxonomy" id="405416"/>
    <lineage>
        <taxon>Bacteria</taxon>
        <taxon>Pseudomonadati</taxon>
        <taxon>Pseudomonadota</taxon>
        <taxon>Gammaproteobacteria</taxon>
        <taxon>Moraxellales</taxon>
        <taxon>Moraxellaceae</taxon>
        <taxon>Acinetobacter</taxon>
        <taxon>Acinetobacter calcoaceticus/baumannii complex</taxon>
    </lineage>
</organism>